<keyword id="KW-0997">Cell inner membrane</keyword>
<keyword id="KW-1003">Cell membrane</keyword>
<keyword id="KW-0406">Ion transport</keyword>
<keyword id="KW-0408">Iron</keyword>
<keyword id="KW-0472">Membrane</keyword>
<keyword id="KW-0479">Metal-binding</keyword>
<keyword id="KW-0812">Transmembrane</keyword>
<keyword id="KW-1133">Transmembrane helix</keyword>
<keyword id="KW-0813">Transport</keyword>
<keyword id="KW-0862">Zinc</keyword>
<keyword id="KW-0864">Zinc transport</keyword>
<proteinExistence type="inferred from homology"/>
<feature type="chain" id="PRO_1000061083" description="Zinc transporter ZupT">
    <location>
        <begin position="1"/>
        <end position="257"/>
    </location>
</feature>
<feature type="transmembrane region" description="Helical" evidence="1">
    <location>
        <begin position="5"/>
        <end position="25"/>
    </location>
</feature>
<feature type="transmembrane region" description="Helical" evidence="1">
    <location>
        <begin position="32"/>
        <end position="52"/>
    </location>
</feature>
<feature type="transmembrane region" description="Helical" evidence="1">
    <location>
        <begin position="61"/>
        <end position="81"/>
    </location>
</feature>
<feature type="transmembrane region" description="Helical" evidence="1">
    <location>
        <begin position="137"/>
        <end position="157"/>
    </location>
</feature>
<feature type="transmembrane region" description="Helical" evidence="1">
    <location>
        <begin position="171"/>
        <end position="191"/>
    </location>
</feature>
<feature type="transmembrane region" description="Helical" evidence="1">
    <location>
        <begin position="195"/>
        <end position="215"/>
    </location>
</feature>
<feature type="transmembrane region" description="Helical" evidence="1">
    <location>
        <begin position="236"/>
        <end position="256"/>
    </location>
</feature>
<feature type="binding site" description="M2 metal binding site" evidence="1">
    <location>
        <position position="120"/>
    </location>
    <ligand>
        <name>Fe(2+)</name>
        <dbReference type="ChEBI" id="CHEBI:29033"/>
    </ligand>
</feature>
<feature type="binding site" description="M2 metal binding site" evidence="1">
    <location>
        <position position="123"/>
    </location>
    <ligand>
        <name>Fe(2+)</name>
        <dbReference type="ChEBI" id="CHEBI:29033"/>
    </ligand>
</feature>
<feature type="binding site" description="M1 metal binding site" evidence="1">
    <location>
        <position position="123"/>
    </location>
    <ligand>
        <name>Zn(2+)</name>
        <dbReference type="ChEBI" id="CHEBI:29105"/>
    </ligand>
</feature>
<feature type="binding site" description="M1 metal binding site" evidence="1">
    <location>
        <position position="148"/>
    </location>
    <ligand>
        <name>Zn(2+)</name>
        <dbReference type="ChEBI" id="CHEBI:29105"/>
    </ligand>
</feature>
<feature type="binding site" description="M2 metal binding site" evidence="1">
    <location>
        <position position="149"/>
    </location>
    <ligand>
        <name>Fe(2+)</name>
        <dbReference type="ChEBI" id="CHEBI:29033"/>
    </ligand>
</feature>
<feature type="binding site" description="M2 metal binding site" evidence="1">
    <location>
        <position position="152"/>
    </location>
    <ligand>
        <name>Fe(2+)</name>
        <dbReference type="ChEBI" id="CHEBI:29033"/>
    </ligand>
</feature>
<feature type="binding site" description="M1 metal binding site" evidence="1">
    <location>
        <position position="152"/>
    </location>
    <ligand>
        <name>Zn(2+)</name>
        <dbReference type="ChEBI" id="CHEBI:29105"/>
    </ligand>
</feature>
<feature type="binding site" description="M2 metal binding site" evidence="1">
    <location>
        <position position="181"/>
    </location>
    <ligand>
        <name>Fe(2+)</name>
        <dbReference type="ChEBI" id="CHEBI:29033"/>
    </ligand>
</feature>
<gene>
    <name evidence="1" type="primary">zupT</name>
    <name type="ordered locus">EcHS_A3217</name>
</gene>
<name>ZUPT_ECOHS</name>
<sequence length="257" mass="26485">MSVPLILTILAGAATFIGAFLGVLGQKPSNRLLAFSLGFAAGIMLLISLMEMLPAALAAEGMSPVLGYGMFIFGLLGYFGLDRMLPHAHPQDLMQKSVQPLPKSIKRTAILLTLGISLHNFPEGIATFVTASSNLELGFGIALAVALHNIPEGLAVAGPVYAATGSKRTAILWAGISGLAEILGGVLAWLILGSMISPVVMAAIMAAVAGIMVALSVDELMPLAKEIDPNNNPSYGVLCGMSVMGFSLVLLQTAGIG</sequence>
<reference key="1">
    <citation type="journal article" date="2008" name="J. Bacteriol.">
        <title>The pangenome structure of Escherichia coli: comparative genomic analysis of E. coli commensal and pathogenic isolates.</title>
        <authorList>
            <person name="Rasko D.A."/>
            <person name="Rosovitz M.J."/>
            <person name="Myers G.S.A."/>
            <person name="Mongodin E.F."/>
            <person name="Fricke W.F."/>
            <person name="Gajer P."/>
            <person name="Crabtree J."/>
            <person name="Sebaihia M."/>
            <person name="Thomson N.R."/>
            <person name="Chaudhuri R."/>
            <person name="Henderson I.R."/>
            <person name="Sperandio V."/>
            <person name="Ravel J."/>
        </authorList>
    </citation>
    <scope>NUCLEOTIDE SEQUENCE [LARGE SCALE GENOMIC DNA]</scope>
    <source>
        <strain>HS</strain>
    </source>
</reference>
<organism>
    <name type="scientific">Escherichia coli O9:H4 (strain HS)</name>
    <dbReference type="NCBI Taxonomy" id="331112"/>
    <lineage>
        <taxon>Bacteria</taxon>
        <taxon>Pseudomonadati</taxon>
        <taxon>Pseudomonadota</taxon>
        <taxon>Gammaproteobacteria</taxon>
        <taxon>Enterobacterales</taxon>
        <taxon>Enterobacteriaceae</taxon>
        <taxon>Escherichia</taxon>
    </lineage>
</organism>
<comment type="function">
    <text evidence="1">Mediates zinc uptake. May also transport other divalent cations.</text>
</comment>
<comment type="catalytic activity">
    <reaction evidence="1">
        <text>Zn(2+)(in) = Zn(2+)(out)</text>
        <dbReference type="Rhea" id="RHEA:29351"/>
        <dbReference type="ChEBI" id="CHEBI:29105"/>
    </reaction>
</comment>
<comment type="subcellular location">
    <subcellularLocation>
        <location evidence="1">Cell inner membrane</location>
        <topology evidence="1">Multi-pass membrane protein</topology>
    </subcellularLocation>
</comment>
<comment type="similarity">
    <text evidence="1">Belongs to the ZIP transporter (TC 2.A.5) family. ZupT subfamily.</text>
</comment>
<protein>
    <recommendedName>
        <fullName evidence="1">Zinc transporter ZupT</fullName>
    </recommendedName>
</protein>
<dbReference type="EMBL" id="CP000802">
    <property type="protein sequence ID" value="ABV07450.1"/>
    <property type="molecule type" value="Genomic_DNA"/>
</dbReference>
<dbReference type="RefSeq" id="WP_001295627.1">
    <property type="nucleotide sequence ID" value="NC_009800.1"/>
</dbReference>
<dbReference type="SMR" id="A8A4J6"/>
<dbReference type="GeneID" id="93778954"/>
<dbReference type="KEGG" id="ecx:EcHS_A3217"/>
<dbReference type="HOGENOM" id="CLU_015114_1_3_6"/>
<dbReference type="GO" id="GO:0005886">
    <property type="term" value="C:plasma membrane"/>
    <property type="evidence" value="ECO:0007669"/>
    <property type="project" value="UniProtKB-SubCell"/>
</dbReference>
<dbReference type="GO" id="GO:0046872">
    <property type="term" value="F:metal ion binding"/>
    <property type="evidence" value="ECO:0007669"/>
    <property type="project" value="UniProtKB-KW"/>
</dbReference>
<dbReference type="GO" id="GO:0005385">
    <property type="term" value="F:zinc ion transmembrane transporter activity"/>
    <property type="evidence" value="ECO:0007669"/>
    <property type="project" value="UniProtKB-UniRule"/>
</dbReference>
<dbReference type="HAMAP" id="MF_00548">
    <property type="entry name" value="ZupT"/>
    <property type="match status" value="1"/>
</dbReference>
<dbReference type="InterPro" id="IPR003689">
    <property type="entry name" value="ZIP"/>
</dbReference>
<dbReference type="InterPro" id="IPR023498">
    <property type="entry name" value="Zn_transptr_ZupT"/>
</dbReference>
<dbReference type="NCBIfam" id="NF003243">
    <property type="entry name" value="PRK04201.1"/>
    <property type="match status" value="1"/>
</dbReference>
<dbReference type="PANTHER" id="PTHR11040:SF205">
    <property type="entry name" value="ZINC TRANSPORTER ZUPT"/>
    <property type="match status" value="1"/>
</dbReference>
<dbReference type="PANTHER" id="PTHR11040">
    <property type="entry name" value="ZINC/IRON TRANSPORTER"/>
    <property type="match status" value="1"/>
</dbReference>
<dbReference type="Pfam" id="PF02535">
    <property type="entry name" value="Zip"/>
    <property type="match status" value="2"/>
</dbReference>
<evidence type="ECO:0000255" key="1">
    <source>
        <dbReference type="HAMAP-Rule" id="MF_00548"/>
    </source>
</evidence>
<accession>A8A4J6</accession>